<name>SCX4_LEIQU</name>
<organism>
    <name type="scientific">Leiurus quinquestriatus quinquestriatus</name>
    <name type="common">Egyptian scorpion</name>
    <name type="synonym">Deathstalker scorpion</name>
    <dbReference type="NCBI Taxonomy" id="6885"/>
    <lineage>
        <taxon>Eukaryota</taxon>
        <taxon>Metazoa</taxon>
        <taxon>Ecdysozoa</taxon>
        <taxon>Arthropoda</taxon>
        <taxon>Chelicerata</taxon>
        <taxon>Arachnida</taxon>
        <taxon>Scorpiones</taxon>
        <taxon>Buthida</taxon>
        <taxon>Buthoidea</taxon>
        <taxon>Buthidae</taxon>
        <taxon>Leiurus</taxon>
    </lineage>
</organism>
<evidence type="ECO:0000250" key="1">
    <source>
        <dbReference type="UniProtKB" id="P86408"/>
    </source>
</evidence>
<evidence type="ECO:0000255" key="2">
    <source>
        <dbReference type="PROSITE-ProRule" id="PRU01210"/>
    </source>
</evidence>
<evidence type="ECO:0000269" key="3">
    <source>
    </source>
</evidence>
<evidence type="ECO:0000269" key="4">
    <source ref="1"/>
</evidence>
<evidence type="ECO:0000303" key="5">
    <source>
    </source>
</evidence>
<evidence type="ECO:0000303" key="6">
    <source ref="1"/>
</evidence>
<evidence type="ECO:0000305" key="7"/>
<evidence type="ECO:0000305" key="8">
    <source>
    </source>
</evidence>
<evidence type="ECO:0000305" key="9">
    <source ref="1"/>
</evidence>
<evidence type="ECO:0000312" key="10">
    <source>
        <dbReference type="PDB" id="8BO0"/>
    </source>
</evidence>
<evidence type="ECO:0007744" key="11">
    <source>
        <dbReference type="PDB" id="8BO0"/>
    </source>
</evidence>
<evidence type="ECO:0007829" key="12">
    <source>
        <dbReference type="PDB" id="8BO0"/>
    </source>
</evidence>
<sequence>GVRDAYIADDKNCVYTCGSNSYCNTECTKNGAESGYCQWLGKYGNACWCIKLPDKVPIRIPGKCR</sequence>
<dbReference type="PIR" id="A01749">
    <property type="entry name" value="NTSR4L"/>
</dbReference>
<dbReference type="PDB" id="8BO0">
    <property type="method" value="NMR"/>
    <property type="chains" value="A=1-65"/>
</dbReference>
<dbReference type="PDBsum" id="8BO0"/>
<dbReference type="SMR" id="P01489"/>
<dbReference type="GO" id="GO:0005576">
    <property type="term" value="C:extracellular region"/>
    <property type="evidence" value="ECO:0007669"/>
    <property type="project" value="UniProtKB-SubCell"/>
</dbReference>
<dbReference type="GO" id="GO:0019871">
    <property type="term" value="F:sodium channel inhibitor activity"/>
    <property type="evidence" value="ECO:0007669"/>
    <property type="project" value="InterPro"/>
</dbReference>
<dbReference type="GO" id="GO:0090729">
    <property type="term" value="F:toxin activity"/>
    <property type="evidence" value="ECO:0007669"/>
    <property type="project" value="UniProtKB-KW"/>
</dbReference>
<dbReference type="GO" id="GO:0006952">
    <property type="term" value="P:defense response"/>
    <property type="evidence" value="ECO:0007669"/>
    <property type="project" value="InterPro"/>
</dbReference>
<dbReference type="CDD" id="cd23106">
    <property type="entry name" value="neurotoxins_LC_scorpion"/>
    <property type="match status" value="1"/>
</dbReference>
<dbReference type="FunFam" id="3.30.30.10:FF:000002">
    <property type="entry name" value="Alpha-like toxin BmK-M1"/>
    <property type="match status" value="1"/>
</dbReference>
<dbReference type="Gene3D" id="3.30.30.10">
    <property type="entry name" value="Knottin, scorpion toxin-like"/>
    <property type="match status" value="1"/>
</dbReference>
<dbReference type="InterPro" id="IPR044062">
    <property type="entry name" value="LCN-type_CS_alpha_beta_dom"/>
</dbReference>
<dbReference type="InterPro" id="IPR003614">
    <property type="entry name" value="Scorpion_toxin-like"/>
</dbReference>
<dbReference type="InterPro" id="IPR036574">
    <property type="entry name" value="Scorpion_toxin-like_sf"/>
</dbReference>
<dbReference type="InterPro" id="IPR018218">
    <property type="entry name" value="Scorpion_toxinL"/>
</dbReference>
<dbReference type="InterPro" id="IPR002061">
    <property type="entry name" value="Scorpion_toxinL/defensin"/>
</dbReference>
<dbReference type="Pfam" id="PF00537">
    <property type="entry name" value="Toxin_3"/>
    <property type="match status" value="1"/>
</dbReference>
<dbReference type="PRINTS" id="PR00285">
    <property type="entry name" value="SCORPNTOXIN"/>
</dbReference>
<dbReference type="PRINTS" id="PR00284">
    <property type="entry name" value="TOXIN"/>
</dbReference>
<dbReference type="SMART" id="SM00505">
    <property type="entry name" value="Knot1"/>
    <property type="match status" value="1"/>
</dbReference>
<dbReference type="SUPFAM" id="SSF57095">
    <property type="entry name" value="Scorpion toxin-like"/>
    <property type="match status" value="1"/>
</dbReference>
<dbReference type="PROSITE" id="PS51863">
    <property type="entry name" value="LCN_CSAB"/>
    <property type="match status" value="1"/>
</dbReference>
<keyword id="KW-0002">3D-structure</keyword>
<keyword id="KW-0027">Amidation</keyword>
<keyword id="KW-0903">Direct protein sequencing</keyword>
<keyword id="KW-1015">Disulfide bond</keyword>
<keyword id="KW-0872">Ion channel impairing toxin</keyword>
<keyword id="KW-0528">Neurotoxin</keyword>
<keyword id="KW-0964">Secreted</keyword>
<keyword id="KW-0800">Toxin</keyword>
<keyword id="KW-0738">Voltage-gated sodium channel impairing toxin</keyword>
<feature type="chain" id="PRO_0000066781" description="Alpha-toxin Lqq4" evidence="4">
    <location>
        <begin position="1"/>
        <end position="65"/>
    </location>
</feature>
<feature type="domain" description="LCN-type CS-alpha/beta" evidence="2">
    <location>
        <begin position="3"/>
        <end position="65"/>
    </location>
</feature>
<feature type="region of interest" description="Specificity module, loop 1" evidence="1">
    <location>
        <begin position="9"/>
        <end position="13"/>
    </location>
</feature>
<feature type="region of interest" description="Specificity module, loop 2" evidence="1">
    <location>
        <begin position="40"/>
        <end position="44"/>
    </location>
</feature>
<feature type="region of interest" description="Specificity module, loop 3" evidence="1">
    <location>
        <begin position="57"/>
        <end position="65"/>
    </location>
</feature>
<feature type="modified residue" description="Arginine amide" evidence="4">
    <location>
        <position position="65"/>
    </location>
</feature>
<feature type="disulfide bond" evidence="3 11">
    <location>
        <begin position="13"/>
        <end position="64"/>
    </location>
</feature>
<feature type="disulfide bond" evidence="3">
    <location>
        <begin position="17"/>
        <end position="37"/>
    </location>
</feature>
<feature type="disulfide bond" evidence="3">
    <location>
        <begin position="23"/>
        <end position="47"/>
    </location>
</feature>
<feature type="disulfide bond" evidence="3 11">
    <location>
        <begin position="27"/>
        <end position="49"/>
    </location>
</feature>
<feature type="strand" evidence="12">
    <location>
        <begin position="2"/>
        <end position="8"/>
    </location>
</feature>
<feature type="helix" evidence="12">
    <location>
        <begin position="20"/>
        <end position="29"/>
    </location>
</feature>
<feature type="strand" evidence="12">
    <location>
        <begin position="33"/>
        <end position="37"/>
    </location>
</feature>
<feature type="strand" evidence="12">
    <location>
        <begin position="47"/>
        <end position="53"/>
    </location>
</feature>
<proteinExistence type="evidence at protein level"/>
<reference key="1">
    <citation type="journal article" date="1985" name="FEBS Lett.">
        <title>Primary structure of toxin IV of Leiurus quinquestriatus quinquestriatus.</title>
        <authorList>
            <person name="Kopeyan C."/>
            <person name="Martinez G."/>
            <person name="Rochat H."/>
        </authorList>
    </citation>
    <scope>PROTEIN SEQUENCE</scope>
    <scope>AMIDATION AT ARG-65</scope>
    <scope>SUBCELLULAR LOCATION</scope>
</reference>
<reference evidence="10" key="2">
    <citation type="journal article" date="2023" name="FEBS Lett.">
        <title>A scorpion toxin affecting sodium channels shows double cis-trans isomerism.</title>
        <authorList>
            <person name="Mineev K.S."/>
            <person name="Chernykh M.A."/>
            <person name="Motov V.V."/>
            <person name="Prudnikova D.A."/>
            <person name="Pavlenko D.M."/>
            <person name="Kuzmenkov A.I."/>
            <person name="Peigneur S."/>
            <person name="Tytgat J."/>
            <person name="Vassilevski A.A."/>
        </authorList>
    </citation>
    <scope>STRUCTURE BY NMR</scope>
    <scope>DISULFIDE BONDS</scope>
    <scope>RECOMBINANT EXPRESSION</scope>
    <scope>MASS SPECTROMETRY</scope>
    <scope>FUNCTION</scope>
    <scope>SUBCELLULAR LOCATION</scope>
    <source>
        <tissue>Venom</tissue>
    </source>
</reference>
<protein>
    <recommendedName>
        <fullName evidence="5 9">Alpha-toxin Lqq4</fullName>
    </recommendedName>
    <alternativeName>
        <fullName evidence="6">Lqq IV</fullName>
        <shortName>LqqIV</shortName>
    </alternativeName>
    <alternativeName>
        <fullName evidence="6">Toxin IV</fullName>
    </alternativeName>
</protein>
<comment type="function">
    <text evidence="3">Alpha toxins bind voltage-independently at site-3 of sodium channels (Nav) and inhibit the inactivation of the activated channels, thereby blocking neuronal transmission. Both native and recombinant (non-amidated) toxins inhibit inactivation of Nav1.2/SCN2A (EC(50)=31.2-36.6 nM), Nav1.6/SCN8A (EC(50)=6.9-8.9 nM), and Nav1.7/SCN9A (EC(50)=182.0-260.1 nM).</text>
</comment>
<comment type="subcellular location">
    <subcellularLocation>
        <location evidence="3 4">Secreted</location>
    </subcellularLocation>
</comment>
<comment type="tissue specificity">
    <text evidence="8 9">Expressed by the venom gland.</text>
</comment>
<comment type="domain">
    <text evidence="7">Has the structural arrangement of an alpha-helix connected to antiparallel beta-sheets by disulfide bonds (CS-alpha/beta).</text>
</comment>
<comment type="PTM">
    <text evidence="3">The recombinant toxin which is used for activity tests is not amidated (PubMed:37501371). However, C-terminal amidation does not appear to play an important role in activity, since the non-amidated recombinant toxin and the native toxin (which is amidated) show similar activities on all sodium channels tested.</text>
</comment>
<comment type="mass spectrometry"/>
<comment type="miscellaneous">
    <text evidence="3">Exists in 4 forms, due to cis-trans isomerization at 17-Cys-Gly-18 and 56-Val-Pro-57. The trans-C17-G18/trans-V56-P57 conformation form is the most abundant (46%), followed by trans-C17-G18/cis-V56-P57 (33%), cis-C17-G18/trans-V56-P57 (14%), and cis-C17-G18/cis-V56-P57 (7%).</text>
</comment>
<comment type="similarity">
    <text evidence="7">Belongs to the long (4 C-C) scorpion toxin superfamily. Sodium channel inhibitor family. Alpha subfamily.</text>
</comment>
<accession>P01489</accession>